<reference key="1">
    <citation type="submission" date="2006-12" db="EMBL/GenBank/DDBJ databases">
        <title>Complete sequence of chromosome 1 of Paracoccus denitrificans PD1222.</title>
        <authorList>
            <person name="Copeland A."/>
            <person name="Lucas S."/>
            <person name="Lapidus A."/>
            <person name="Barry K."/>
            <person name="Detter J.C."/>
            <person name="Glavina del Rio T."/>
            <person name="Hammon N."/>
            <person name="Israni S."/>
            <person name="Dalin E."/>
            <person name="Tice H."/>
            <person name="Pitluck S."/>
            <person name="Munk A.C."/>
            <person name="Brettin T."/>
            <person name="Bruce D."/>
            <person name="Han C."/>
            <person name="Tapia R."/>
            <person name="Gilna P."/>
            <person name="Schmutz J."/>
            <person name="Larimer F."/>
            <person name="Land M."/>
            <person name="Hauser L."/>
            <person name="Kyrpides N."/>
            <person name="Lykidis A."/>
            <person name="Spiro S."/>
            <person name="Richardson D.J."/>
            <person name="Moir J.W.B."/>
            <person name="Ferguson S.J."/>
            <person name="van Spanning R.J.M."/>
            <person name="Richardson P."/>
        </authorList>
    </citation>
    <scope>NUCLEOTIDE SEQUENCE [LARGE SCALE GENOMIC DNA]</scope>
    <source>
        <strain>Pd 1222</strain>
    </source>
</reference>
<organism>
    <name type="scientific">Paracoccus denitrificans (strain Pd 1222)</name>
    <dbReference type="NCBI Taxonomy" id="318586"/>
    <lineage>
        <taxon>Bacteria</taxon>
        <taxon>Pseudomonadati</taxon>
        <taxon>Pseudomonadota</taxon>
        <taxon>Alphaproteobacteria</taxon>
        <taxon>Rhodobacterales</taxon>
        <taxon>Paracoccaceae</taxon>
        <taxon>Paracoccus</taxon>
    </lineage>
</organism>
<feature type="chain" id="PRO_1000054988" description="Small ribosomal subunit protein uS17">
    <location>
        <begin position="1"/>
        <end position="82"/>
    </location>
</feature>
<comment type="function">
    <text evidence="1">One of the primary rRNA binding proteins, it binds specifically to the 5'-end of 16S ribosomal RNA.</text>
</comment>
<comment type="subunit">
    <text evidence="1">Part of the 30S ribosomal subunit.</text>
</comment>
<comment type="similarity">
    <text evidence="1">Belongs to the universal ribosomal protein uS17 family.</text>
</comment>
<name>RS17_PARDP</name>
<dbReference type="EMBL" id="CP000489">
    <property type="protein sequence ID" value="ABL68880.1"/>
    <property type="molecule type" value="Genomic_DNA"/>
</dbReference>
<dbReference type="RefSeq" id="WP_011747109.1">
    <property type="nucleotide sequence ID" value="NC_008686.1"/>
</dbReference>
<dbReference type="SMR" id="A1B036"/>
<dbReference type="STRING" id="318586.Pden_0768"/>
<dbReference type="EnsemblBacteria" id="ABL68880">
    <property type="protein sequence ID" value="ABL68880"/>
    <property type="gene ID" value="Pden_0768"/>
</dbReference>
<dbReference type="GeneID" id="93451992"/>
<dbReference type="KEGG" id="pde:Pden_0768"/>
<dbReference type="eggNOG" id="COG0186">
    <property type="taxonomic scope" value="Bacteria"/>
</dbReference>
<dbReference type="HOGENOM" id="CLU_073626_1_1_5"/>
<dbReference type="OrthoDB" id="9811714at2"/>
<dbReference type="Proteomes" id="UP000000361">
    <property type="component" value="Chromosome 1"/>
</dbReference>
<dbReference type="GO" id="GO:0022627">
    <property type="term" value="C:cytosolic small ribosomal subunit"/>
    <property type="evidence" value="ECO:0007669"/>
    <property type="project" value="TreeGrafter"/>
</dbReference>
<dbReference type="GO" id="GO:0019843">
    <property type="term" value="F:rRNA binding"/>
    <property type="evidence" value="ECO:0007669"/>
    <property type="project" value="UniProtKB-UniRule"/>
</dbReference>
<dbReference type="GO" id="GO:0003735">
    <property type="term" value="F:structural constituent of ribosome"/>
    <property type="evidence" value="ECO:0007669"/>
    <property type="project" value="InterPro"/>
</dbReference>
<dbReference type="GO" id="GO:0006412">
    <property type="term" value="P:translation"/>
    <property type="evidence" value="ECO:0007669"/>
    <property type="project" value="UniProtKB-UniRule"/>
</dbReference>
<dbReference type="CDD" id="cd00364">
    <property type="entry name" value="Ribosomal_uS17"/>
    <property type="match status" value="1"/>
</dbReference>
<dbReference type="Gene3D" id="2.40.50.140">
    <property type="entry name" value="Nucleic acid-binding proteins"/>
    <property type="match status" value="1"/>
</dbReference>
<dbReference type="HAMAP" id="MF_01345_B">
    <property type="entry name" value="Ribosomal_uS17_B"/>
    <property type="match status" value="1"/>
</dbReference>
<dbReference type="InterPro" id="IPR012340">
    <property type="entry name" value="NA-bd_OB-fold"/>
</dbReference>
<dbReference type="InterPro" id="IPR000266">
    <property type="entry name" value="Ribosomal_uS17"/>
</dbReference>
<dbReference type="InterPro" id="IPR019984">
    <property type="entry name" value="Ribosomal_uS17_bact/chlr"/>
</dbReference>
<dbReference type="NCBIfam" id="NF004123">
    <property type="entry name" value="PRK05610.1"/>
    <property type="match status" value="1"/>
</dbReference>
<dbReference type="NCBIfam" id="TIGR03635">
    <property type="entry name" value="uS17_bact"/>
    <property type="match status" value="1"/>
</dbReference>
<dbReference type="PANTHER" id="PTHR10744">
    <property type="entry name" value="40S RIBOSOMAL PROTEIN S11 FAMILY MEMBER"/>
    <property type="match status" value="1"/>
</dbReference>
<dbReference type="PANTHER" id="PTHR10744:SF1">
    <property type="entry name" value="SMALL RIBOSOMAL SUBUNIT PROTEIN US17M"/>
    <property type="match status" value="1"/>
</dbReference>
<dbReference type="Pfam" id="PF00366">
    <property type="entry name" value="Ribosomal_S17"/>
    <property type="match status" value="1"/>
</dbReference>
<dbReference type="PRINTS" id="PR00973">
    <property type="entry name" value="RIBOSOMALS17"/>
</dbReference>
<dbReference type="SUPFAM" id="SSF50249">
    <property type="entry name" value="Nucleic acid-binding proteins"/>
    <property type="match status" value="1"/>
</dbReference>
<evidence type="ECO:0000255" key="1">
    <source>
        <dbReference type="HAMAP-Rule" id="MF_01345"/>
    </source>
</evidence>
<evidence type="ECO:0000305" key="2"/>
<protein>
    <recommendedName>
        <fullName evidence="1">Small ribosomal subunit protein uS17</fullName>
    </recommendedName>
    <alternativeName>
        <fullName evidence="2">30S ribosomal protein S17</fullName>
    </alternativeName>
</protein>
<accession>A1B036</accession>
<gene>
    <name evidence="1" type="primary">rpsQ</name>
    <name type="ordered locus">Pden_0768</name>
</gene>
<proteinExistence type="inferred from homology"/>
<keyword id="KW-1185">Reference proteome</keyword>
<keyword id="KW-0687">Ribonucleoprotein</keyword>
<keyword id="KW-0689">Ribosomal protein</keyword>
<keyword id="KW-0694">RNA-binding</keyword>
<keyword id="KW-0699">rRNA-binding</keyword>
<sequence>MPKRILQGKVVSDKNEQTVTVLVERRFKHPLLHKTVRSSKKYRAHDADNQFKVGDTVRIVECAPISKTKRWTVLTETAEVSA</sequence>